<reference key="1">
    <citation type="journal article" date="1998" name="Br. J. Pharmacol.">
        <title>Molecular cloning, expression and characterization of cDNA encoding a mouse alpha1a-adrenoceptor.</title>
        <authorList>
            <person name="Xiao L."/>
            <person name="Scofield M.A."/>
            <person name="Jeffries W.B."/>
        </authorList>
    </citation>
    <scope>NUCLEOTIDE SEQUENCE [MRNA]</scope>
    <scope>CHARACTERIZATION</scope>
    <source>
        <strain>CD-1</strain>
        <tissue>Brain</tissue>
        <tissue>Kidney</tissue>
    </source>
</reference>
<reference key="2">
    <citation type="journal article" date="2005" name="Science">
        <title>The transcriptional landscape of the mammalian genome.</title>
        <authorList>
            <person name="Carninci P."/>
            <person name="Kasukawa T."/>
            <person name="Katayama S."/>
            <person name="Gough J."/>
            <person name="Frith M.C."/>
            <person name="Maeda N."/>
            <person name="Oyama R."/>
            <person name="Ravasi T."/>
            <person name="Lenhard B."/>
            <person name="Wells C."/>
            <person name="Kodzius R."/>
            <person name="Shimokawa K."/>
            <person name="Bajic V.B."/>
            <person name="Brenner S.E."/>
            <person name="Batalov S."/>
            <person name="Forrest A.R."/>
            <person name="Zavolan M."/>
            <person name="Davis M.J."/>
            <person name="Wilming L.G."/>
            <person name="Aidinis V."/>
            <person name="Allen J.E."/>
            <person name="Ambesi-Impiombato A."/>
            <person name="Apweiler R."/>
            <person name="Aturaliya R.N."/>
            <person name="Bailey T.L."/>
            <person name="Bansal M."/>
            <person name="Baxter L."/>
            <person name="Beisel K.W."/>
            <person name="Bersano T."/>
            <person name="Bono H."/>
            <person name="Chalk A.M."/>
            <person name="Chiu K.P."/>
            <person name="Choudhary V."/>
            <person name="Christoffels A."/>
            <person name="Clutterbuck D.R."/>
            <person name="Crowe M.L."/>
            <person name="Dalla E."/>
            <person name="Dalrymple B.P."/>
            <person name="de Bono B."/>
            <person name="Della Gatta G."/>
            <person name="di Bernardo D."/>
            <person name="Down T."/>
            <person name="Engstrom P."/>
            <person name="Fagiolini M."/>
            <person name="Faulkner G."/>
            <person name="Fletcher C.F."/>
            <person name="Fukushima T."/>
            <person name="Furuno M."/>
            <person name="Futaki S."/>
            <person name="Gariboldi M."/>
            <person name="Georgii-Hemming P."/>
            <person name="Gingeras T.R."/>
            <person name="Gojobori T."/>
            <person name="Green R.E."/>
            <person name="Gustincich S."/>
            <person name="Harbers M."/>
            <person name="Hayashi Y."/>
            <person name="Hensch T.K."/>
            <person name="Hirokawa N."/>
            <person name="Hill D."/>
            <person name="Huminiecki L."/>
            <person name="Iacono M."/>
            <person name="Ikeo K."/>
            <person name="Iwama A."/>
            <person name="Ishikawa T."/>
            <person name="Jakt M."/>
            <person name="Kanapin A."/>
            <person name="Katoh M."/>
            <person name="Kawasawa Y."/>
            <person name="Kelso J."/>
            <person name="Kitamura H."/>
            <person name="Kitano H."/>
            <person name="Kollias G."/>
            <person name="Krishnan S.P."/>
            <person name="Kruger A."/>
            <person name="Kummerfeld S.K."/>
            <person name="Kurochkin I.V."/>
            <person name="Lareau L.F."/>
            <person name="Lazarevic D."/>
            <person name="Lipovich L."/>
            <person name="Liu J."/>
            <person name="Liuni S."/>
            <person name="McWilliam S."/>
            <person name="Madan Babu M."/>
            <person name="Madera M."/>
            <person name="Marchionni L."/>
            <person name="Matsuda H."/>
            <person name="Matsuzawa S."/>
            <person name="Miki H."/>
            <person name="Mignone F."/>
            <person name="Miyake S."/>
            <person name="Morris K."/>
            <person name="Mottagui-Tabar S."/>
            <person name="Mulder N."/>
            <person name="Nakano N."/>
            <person name="Nakauchi H."/>
            <person name="Ng P."/>
            <person name="Nilsson R."/>
            <person name="Nishiguchi S."/>
            <person name="Nishikawa S."/>
            <person name="Nori F."/>
            <person name="Ohara O."/>
            <person name="Okazaki Y."/>
            <person name="Orlando V."/>
            <person name="Pang K.C."/>
            <person name="Pavan W.J."/>
            <person name="Pavesi G."/>
            <person name="Pesole G."/>
            <person name="Petrovsky N."/>
            <person name="Piazza S."/>
            <person name="Reed J."/>
            <person name="Reid J.F."/>
            <person name="Ring B.Z."/>
            <person name="Ringwald M."/>
            <person name="Rost B."/>
            <person name="Ruan Y."/>
            <person name="Salzberg S.L."/>
            <person name="Sandelin A."/>
            <person name="Schneider C."/>
            <person name="Schoenbach C."/>
            <person name="Sekiguchi K."/>
            <person name="Semple C.A."/>
            <person name="Seno S."/>
            <person name="Sessa L."/>
            <person name="Sheng Y."/>
            <person name="Shibata Y."/>
            <person name="Shimada H."/>
            <person name="Shimada K."/>
            <person name="Silva D."/>
            <person name="Sinclair B."/>
            <person name="Sperling S."/>
            <person name="Stupka E."/>
            <person name="Sugiura K."/>
            <person name="Sultana R."/>
            <person name="Takenaka Y."/>
            <person name="Taki K."/>
            <person name="Tammoja K."/>
            <person name="Tan S.L."/>
            <person name="Tang S."/>
            <person name="Taylor M.S."/>
            <person name="Tegner J."/>
            <person name="Teichmann S.A."/>
            <person name="Ueda H.R."/>
            <person name="van Nimwegen E."/>
            <person name="Verardo R."/>
            <person name="Wei C.L."/>
            <person name="Yagi K."/>
            <person name="Yamanishi H."/>
            <person name="Zabarovsky E."/>
            <person name="Zhu S."/>
            <person name="Zimmer A."/>
            <person name="Hide W."/>
            <person name="Bult C."/>
            <person name="Grimmond S.M."/>
            <person name="Teasdale R.D."/>
            <person name="Liu E.T."/>
            <person name="Brusic V."/>
            <person name="Quackenbush J."/>
            <person name="Wahlestedt C."/>
            <person name="Mattick J.S."/>
            <person name="Hume D.A."/>
            <person name="Kai C."/>
            <person name="Sasaki D."/>
            <person name="Tomaru Y."/>
            <person name="Fukuda S."/>
            <person name="Kanamori-Katayama M."/>
            <person name="Suzuki M."/>
            <person name="Aoki J."/>
            <person name="Arakawa T."/>
            <person name="Iida J."/>
            <person name="Imamura K."/>
            <person name="Itoh M."/>
            <person name="Kato T."/>
            <person name="Kawaji H."/>
            <person name="Kawagashira N."/>
            <person name="Kawashima T."/>
            <person name="Kojima M."/>
            <person name="Kondo S."/>
            <person name="Konno H."/>
            <person name="Nakano K."/>
            <person name="Ninomiya N."/>
            <person name="Nishio T."/>
            <person name="Okada M."/>
            <person name="Plessy C."/>
            <person name="Shibata K."/>
            <person name="Shiraki T."/>
            <person name="Suzuki S."/>
            <person name="Tagami M."/>
            <person name="Waki K."/>
            <person name="Watahiki A."/>
            <person name="Okamura-Oho Y."/>
            <person name="Suzuki H."/>
            <person name="Kawai J."/>
            <person name="Hayashizaki Y."/>
        </authorList>
    </citation>
    <scope>NUCLEOTIDE SEQUENCE [LARGE SCALE MRNA]</scope>
    <source>
        <strain>C57BL/6J</strain>
        <tissue>Spinal cord</tissue>
    </source>
</reference>
<reference key="3">
    <citation type="submission" date="2005-07" db="EMBL/GenBank/DDBJ databases">
        <authorList>
            <person name="Mural R.J."/>
            <person name="Adams M.D."/>
            <person name="Myers E.W."/>
            <person name="Smith H.O."/>
            <person name="Venter J.C."/>
        </authorList>
    </citation>
    <scope>NUCLEOTIDE SEQUENCE [LARGE SCALE GENOMIC DNA]</scope>
</reference>
<reference key="4">
    <citation type="journal article" date="2004" name="Genome Res.">
        <title>The status, quality, and expansion of the NIH full-length cDNA project: the Mammalian Gene Collection (MGC).</title>
        <authorList>
            <consortium name="The MGC Project Team"/>
        </authorList>
    </citation>
    <scope>NUCLEOTIDE SEQUENCE [LARGE SCALE MRNA]</scope>
</reference>
<reference key="5">
    <citation type="journal article" date="1995" name="J. Neurochem.">
        <title>Molecular cloning of alpha 1d-adrenergic receptor and tissue distribution of three alpha 1-adrenergic receptor subtypes in mouse.</title>
        <authorList>
            <person name="Alonso-Llamazares A."/>
            <person name="Zamanillo D."/>
            <person name="Casanova E."/>
            <person name="Ovalle S."/>
            <person name="Calvo P."/>
            <person name="Chinchetru M.A."/>
        </authorList>
    </citation>
    <scope>NUCLEOTIDE SEQUENCE [MRNA] OF 197-280</scope>
    <source>
        <tissue>Brain</tissue>
    </source>
</reference>
<reference key="6">
    <citation type="journal article" date="2012" name="Cell. Signal.">
        <title>Nuclear localization drives alpha1-adrenergic receptor oligomerization and signaling in cardiac myocytes.</title>
        <authorList>
            <person name="Wright C.D."/>
            <person name="Wu S.C."/>
            <person name="Dahl E.F."/>
            <person name="Sazama A.J."/>
            <person name="O'Connell T.D."/>
        </authorList>
    </citation>
    <scope>SUBCELLULAR LOCATION</scope>
</reference>
<proteinExistence type="evidence at protein level"/>
<dbReference type="EMBL" id="AF031431">
    <property type="protein sequence ID" value="AAC02658.1"/>
    <property type="molecule type" value="mRNA"/>
</dbReference>
<dbReference type="EMBL" id="AK079597">
    <property type="protein sequence ID" value="BAC37694.1"/>
    <property type="molecule type" value="mRNA"/>
</dbReference>
<dbReference type="EMBL" id="CH466535">
    <property type="protein sequence ID" value="EDL35992.1"/>
    <property type="molecule type" value="Genomic_DNA"/>
</dbReference>
<dbReference type="EMBL" id="BC113139">
    <property type="protein sequence ID" value="AAI13140.1"/>
    <property type="molecule type" value="mRNA"/>
</dbReference>
<dbReference type="EMBL" id="S80220">
    <property type="protein sequence ID" value="AAB47044.1"/>
    <property type="status" value="ALT_INIT"/>
    <property type="molecule type" value="mRNA"/>
</dbReference>
<dbReference type="CCDS" id="CCDS27223.1"/>
<dbReference type="RefSeq" id="NP_001258689.1">
    <property type="nucleotide sequence ID" value="NM_001271760.2"/>
</dbReference>
<dbReference type="RefSeq" id="NP_001409021.1">
    <property type="nucleotide sequence ID" value="NM_001422092.1"/>
</dbReference>
<dbReference type="RefSeq" id="NP_001409022.1">
    <property type="nucleotide sequence ID" value="NM_001422093.1"/>
</dbReference>
<dbReference type="RefSeq" id="NP_001409024.1">
    <property type="nucleotide sequence ID" value="NM_001422095.1"/>
</dbReference>
<dbReference type="RefSeq" id="NP_001409025.1">
    <property type="nucleotide sequence ID" value="NM_001422096.1"/>
</dbReference>
<dbReference type="RefSeq" id="NP_038489.2">
    <property type="nucleotide sequence ID" value="NM_013461.4"/>
</dbReference>
<dbReference type="RefSeq" id="XP_006518507.1">
    <property type="nucleotide sequence ID" value="XM_006518444.3"/>
</dbReference>
<dbReference type="RefSeq" id="XP_011243225.1">
    <property type="nucleotide sequence ID" value="XM_011244923.4"/>
</dbReference>
<dbReference type="RefSeq" id="XP_011243226.1">
    <property type="nucleotide sequence ID" value="XM_011244924.4"/>
</dbReference>
<dbReference type="RefSeq" id="XP_011243227.1">
    <property type="nucleotide sequence ID" value="XM_011244925.4"/>
</dbReference>
<dbReference type="RefSeq" id="XP_017171289.1">
    <property type="nucleotide sequence ID" value="XM_017315800.1"/>
</dbReference>
<dbReference type="RefSeq" id="XP_017171290.1">
    <property type="nucleotide sequence ID" value="XM_017315801.1"/>
</dbReference>
<dbReference type="SMR" id="P97718"/>
<dbReference type="CORUM" id="P97718"/>
<dbReference type="FunCoup" id="P97718">
    <property type="interactions" value="1163"/>
</dbReference>
<dbReference type="IntAct" id="P97718">
    <property type="interactions" value="1"/>
</dbReference>
<dbReference type="STRING" id="10090.ENSMUSP00000124570"/>
<dbReference type="BindingDB" id="P97718"/>
<dbReference type="ChEMBL" id="CHEMBL2822"/>
<dbReference type="GlyCosmos" id="P97718">
    <property type="glycosylation" value="3 sites, No reported glycans"/>
</dbReference>
<dbReference type="GlyGen" id="P97718">
    <property type="glycosylation" value="3 sites"/>
</dbReference>
<dbReference type="iPTMnet" id="P97718"/>
<dbReference type="PhosphoSitePlus" id="P97718"/>
<dbReference type="PaxDb" id="10090-ENSMUSP00000053703"/>
<dbReference type="ProteomicsDB" id="285607"/>
<dbReference type="Antibodypedia" id="10062">
    <property type="antibodies" value="373 antibodies from 38 providers"/>
</dbReference>
<dbReference type="DNASU" id="11549"/>
<dbReference type="Ensembl" id="ENSMUST00000054661.8">
    <property type="protein sequence ID" value="ENSMUSP00000053703.2"/>
    <property type="gene ID" value="ENSMUSG00000045875.14"/>
</dbReference>
<dbReference type="Ensembl" id="ENSMUST00000159068.2">
    <property type="protein sequence ID" value="ENSMUSP00000124570.2"/>
    <property type="gene ID" value="ENSMUSG00000045875.14"/>
</dbReference>
<dbReference type="Ensembl" id="ENSMUST00000161339.2">
    <property type="protein sequence ID" value="ENSMUSP00000125354.2"/>
    <property type="gene ID" value="ENSMUSG00000045875.14"/>
</dbReference>
<dbReference type="GeneID" id="11549"/>
<dbReference type="KEGG" id="mmu:11549"/>
<dbReference type="UCSC" id="uc007ukh.2">
    <property type="organism name" value="mouse"/>
</dbReference>
<dbReference type="AGR" id="MGI:104773"/>
<dbReference type="CTD" id="148"/>
<dbReference type="MGI" id="MGI:104773">
    <property type="gene designation" value="Adra1a"/>
</dbReference>
<dbReference type="VEuPathDB" id="HostDB:ENSMUSG00000045875"/>
<dbReference type="eggNOG" id="KOG3656">
    <property type="taxonomic scope" value="Eukaryota"/>
</dbReference>
<dbReference type="GeneTree" id="ENSGT00940000159105"/>
<dbReference type="InParanoid" id="P97718"/>
<dbReference type="OMA" id="CLLRKQP"/>
<dbReference type="OrthoDB" id="6358729at2759"/>
<dbReference type="PhylomeDB" id="P97718"/>
<dbReference type="TreeFam" id="TF331895"/>
<dbReference type="Reactome" id="R-MMU-390696">
    <property type="pathway name" value="Adrenoceptors"/>
</dbReference>
<dbReference type="Reactome" id="R-MMU-416476">
    <property type="pathway name" value="G alpha (q) signalling events"/>
</dbReference>
<dbReference type="Reactome" id="R-MMU-416482">
    <property type="pathway name" value="G alpha (12/13) signalling events"/>
</dbReference>
<dbReference type="BioGRID-ORCS" id="11549">
    <property type="hits" value="5 hits in 79 CRISPR screens"/>
</dbReference>
<dbReference type="ChiTaRS" id="Adra1a">
    <property type="organism name" value="mouse"/>
</dbReference>
<dbReference type="PRO" id="PR:P97718"/>
<dbReference type="Proteomes" id="UP000000589">
    <property type="component" value="Chromosome 14"/>
</dbReference>
<dbReference type="RNAct" id="P97718">
    <property type="molecule type" value="protein"/>
</dbReference>
<dbReference type="Bgee" id="ENSMUSG00000045875">
    <property type="expression patterns" value="Expressed in right kidney and 40 other cell types or tissues"/>
</dbReference>
<dbReference type="ExpressionAtlas" id="P97718">
    <property type="expression patterns" value="baseline and differential"/>
</dbReference>
<dbReference type="GO" id="GO:0005901">
    <property type="term" value="C:caveola"/>
    <property type="evidence" value="ECO:0007669"/>
    <property type="project" value="UniProtKB-SubCell"/>
</dbReference>
<dbReference type="GO" id="GO:0005737">
    <property type="term" value="C:cytoplasm"/>
    <property type="evidence" value="ECO:0000250"/>
    <property type="project" value="UniProtKB"/>
</dbReference>
<dbReference type="GO" id="GO:0005829">
    <property type="term" value="C:cytosol"/>
    <property type="evidence" value="ECO:0007669"/>
    <property type="project" value="Ensembl"/>
</dbReference>
<dbReference type="GO" id="GO:0016020">
    <property type="term" value="C:membrane"/>
    <property type="evidence" value="ECO:0000314"/>
    <property type="project" value="MGI"/>
</dbReference>
<dbReference type="GO" id="GO:0031965">
    <property type="term" value="C:nuclear membrane"/>
    <property type="evidence" value="ECO:0000250"/>
    <property type="project" value="UniProtKB"/>
</dbReference>
<dbReference type="GO" id="GO:0005654">
    <property type="term" value="C:nucleoplasm"/>
    <property type="evidence" value="ECO:0007669"/>
    <property type="project" value="Ensembl"/>
</dbReference>
<dbReference type="GO" id="GO:0005634">
    <property type="term" value="C:nucleus"/>
    <property type="evidence" value="ECO:0000250"/>
    <property type="project" value="UniProtKB"/>
</dbReference>
<dbReference type="GO" id="GO:0005886">
    <property type="term" value="C:plasma membrane"/>
    <property type="evidence" value="ECO:0000250"/>
    <property type="project" value="UniProtKB"/>
</dbReference>
<dbReference type="GO" id="GO:0004937">
    <property type="term" value="F:alpha1-adrenergic receptor activity"/>
    <property type="evidence" value="ECO:0000314"/>
    <property type="project" value="MGI"/>
</dbReference>
<dbReference type="GO" id="GO:0046982">
    <property type="term" value="F:protein heterodimerization activity"/>
    <property type="evidence" value="ECO:0000250"/>
    <property type="project" value="UniProtKB"/>
</dbReference>
<dbReference type="GO" id="GO:0071875">
    <property type="term" value="P:adrenergic receptor signaling pathway"/>
    <property type="evidence" value="ECO:0000314"/>
    <property type="project" value="MGI"/>
</dbReference>
<dbReference type="GO" id="GO:0007512">
    <property type="term" value="P:adult heart development"/>
    <property type="evidence" value="ECO:0000316"/>
    <property type="project" value="MGI"/>
</dbReference>
<dbReference type="GO" id="GO:0061049">
    <property type="term" value="P:cell growth involved in cardiac muscle cell development"/>
    <property type="evidence" value="ECO:0000316"/>
    <property type="project" value="MGI"/>
</dbReference>
<dbReference type="GO" id="GO:0000165">
    <property type="term" value="P:MAPK cascade"/>
    <property type="evidence" value="ECO:0000316"/>
    <property type="project" value="MGI"/>
</dbReference>
<dbReference type="GO" id="GO:0010507">
    <property type="term" value="P:negative regulation of autophagy"/>
    <property type="evidence" value="ECO:0000314"/>
    <property type="project" value="MGI"/>
</dbReference>
<dbReference type="GO" id="GO:0001985">
    <property type="term" value="P:negative regulation of heart rate involved in baroreceptor response to increased systemic arterial blood pressure"/>
    <property type="evidence" value="ECO:0000315"/>
    <property type="project" value="MGI"/>
</dbReference>
<dbReference type="GO" id="GO:0035024">
    <property type="term" value="P:negative regulation of Rho protein signal transduction"/>
    <property type="evidence" value="ECO:0000266"/>
    <property type="project" value="MGI"/>
</dbReference>
<dbReference type="GO" id="GO:0150099">
    <property type="term" value="P:neuron-glial cell signaling"/>
    <property type="evidence" value="ECO:0000316"/>
    <property type="project" value="ARUK-UCL"/>
</dbReference>
<dbReference type="GO" id="GO:0001994">
    <property type="term" value="P:norepinephrine-epinephrine vasoconstriction involved in regulation of systemic arterial blood pressure"/>
    <property type="evidence" value="ECO:0000315"/>
    <property type="project" value="MGI"/>
</dbReference>
<dbReference type="GO" id="GO:0035265">
    <property type="term" value="P:organ growth"/>
    <property type="evidence" value="ECO:0000316"/>
    <property type="project" value="MGI"/>
</dbReference>
<dbReference type="GO" id="GO:0007200">
    <property type="term" value="P:phospholipase C-activating G protein-coupled receptor signaling pathway"/>
    <property type="evidence" value="ECO:0000314"/>
    <property type="project" value="MGI"/>
</dbReference>
<dbReference type="GO" id="GO:0097195">
    <property type="term" value="P:pilomotor reflex"/>
    <property type="evidence" value="ECO:0000314"/>
    <property type="project" value="BHF-UCL"/>
</dbReference>
<dbReference type="GO" id="GO:0010613">
    <property type="term" value="P:positive regulation of cardiac muscle hypertrophy"/>
    <property type="evidence" value="ECO:0000314"/>
    <property type="project" value="MGI"/>
</dbReference>
<dbReference type="GO" id="GO:0001996">
    <property type="term" value="P:positive regulation of heart rate by epinephrine-norepinephrine"/>
    <property type="evidence" value="ECO:0000316"/>
    <property type="project" value="MGI"/>
</dbReference>
<dbReference type="GO" id="GO:0043410">
    <property type="term" value="P:positive regulation of MAPK cascade"/>
    <property type="evidence" value="ECO:0000316"/>
    <property type="project" value="MGI"/>
</dbReference>
<dbReference type="GO" id="GO:0045987">
    <property type="term" value="P:positive regulation of smooth muscle contraction"/>
    <property type="evidence" value="ECO:0000314"/>
    <property type="project" value="BHF-UCL"/>
</dbReference>
<dbReference type="GO" id="GO:0001997">
    <property type="term" value="P:positive regulation of the force of heart contraction by epinephrine-norepinephrine"/>
    <property type="evidence" value="ECO:0000316"/>
    <property type="project" value="MGI"/>
</dbReference>
<dbReference type="GO" id="GO:0008217">
    <property type="term" value="P:regulation of blood pressure"/>
    <property type="evidence" value="ECO:0000315"/>
    <property type="project" value="MGI"/>
</dbReference>
<dbReference type="GO" id="GO:0055117">
    <property type="term" value="P:regulation of cardiac muscle contraction"/>
    <property type="evidence" value="ECO:0007669"/>
    <property type="project" value="InterPro"/>
</dbReference>
<dbReference type="GO" id="GO:0019229">
    <property type="term" value="P:regulation of vasoconstriction"/>
    <property type="evidence" value="ECO:0007669"/>
    <property type="project" value="InterPro"/>
</dbReference>
<dbReference type="CDD" id="cd15325">
    <property type="entry name" value="7tmA_alpha1A_AR"/>
    <property type="match status" value="1"/>
</dbReference>
<dbReference type="FunFam" id="1.20.1070.10:FF:000027">
    <property type="entry name" value="alpha-1A adrenergic receptor"/>
    <property type="match status" value="1"/>
</dbReference>
<dbReference type="Gene3D" id="1.20.1070.10">
    <property type="entry name" value="Rhodopsin 7-helix transmembrane proteins"/>
    <property type="match status" value="1"/>
</dbReference>
<dbReference type="InterPro" id="IPR002233">
    <property type="entry name" value="ADR_fam"/>
</dbReference>
<dbReference type="InterPro" id="IPR001004">
    <property type="entry name" value="ADRA1A_rcpt"/>
</dbReference>
<dbReference type="InterPro" id="IPR000276">
    <property type="entry name" value="GPCR_Rhodpsn"/>
</dbReference>
<dbReference type="InterPro" id="IPR017452">
    <property type="entry name" value="GPCR_Rhodpsn_7TM"/>
</dbReference>
<dbReference type="PANTHER" id="PTHR24248">
    <property type="entry name" value="ADRENERGIC RECEPTOR-RELATED G-PROTEIN COUPLED RECEPTOR"/>
    <property type="match status" value="1"/>
</dbReference>
<dbReference type="PANTHER" id="PTHR24248:SF16">
    <property type="entry name" value="ALPHA-1A ADRENERGIC RECEPTOR"/>
    <property type="match status" value="1"/>
</dbReference>
<dbReference type="Pfam" id="PF00001">
    <property type="entry name" value="7tm_1"/>
    <property type="match status" value="1"/>
</dbReference>
<dbReference type="PRINTS" id="PR01103">
    <property type="entry name" value="ADRENERGICR"/>
</dbReference>
<dbReference type="PRINTS" id="PR00557">
    <property type="entry name" value="ADRENRGCA1AR"/>
</dbReference>
<dbReference type="PRINTS" id="PR00237">
    <property type="entry name" value="GPCRRHODOPSN"/>
</dbReference>
<dbReference type="SMART" id="SM01381">
    <property type="entry name" value="7TM_GPCR_Srsx"/>
    <property type="match status" value="1"/>
</dbReference>
<dbReference type="SUPFAM" id="SSF81321">
    <property type="entry name" value="Family A G protein-coupled receptor-like"/>
    <property type="match status" value="1"/>
</dbReference>
<dbReference type="PROSITE" id="PS00237">
    <property type="entry name" value="G_PROTEIN_RECEP_F1_1"/>
    <property type="match status" value="1"/>
</dbReference>
<dbReference type="PROSITE" id="PS50262">
    <property type="entry name" value="G_PROTEIN_RECEP_F1_2"/>
    <property type="match status" value="1"/>
</dbReference>
<keyword id="KW-1003">Cell membrane</keyword>
<keyword id="KW-0963">Cytoplasm</keyword>
<keyword id="KW-1015">Disulfide bond</keyword>
<keyword id="KW-0297">G-protein coupled receptor</keyword>
<keyword id="KW-0325">Glycoprotein</keyword>
<keyword id="KW-0449">Lipoprotein</keyword>
<keyword id="KW-0472">Membrane</keyword>
<keyword id="KW-0539">Nucleus</keyword>
<keyword id="KW-0564">Palmitate</keyword>
<keyword id="KW-0597">Phosphoprotein</keyword>
<keyword id="KW-0675">Receptor</keyword>
<keyword id="KW-1185">Reference proteome</keyword>
<keyword id="KW-0807">Transducer</keyword>
<keyword id="KW-0812">Transmembrane</keyword>
<keyword id="KW-1133">Transmembrane helix</keyword>
<gene>
    <name type="primary">Adra1a</name>
    <name type="synonym">Adra1c</name>
</gene>
<evidence type="ECO:0000250" key="1"/>
<evidence type="ECO:0000250" key="2">
    <source>
        <dbReference type="UniProtKB" id="P35348"/>
    </source>
</evidence>
<evidence type="ECO:0000255" key="3"/>
<evidence type="ECO:0000255" key="4">
    <source>
        <dbReference type="PROSITE-ProRule" id="PRU00521"/>
    </source>
</evidence>
<evidence type="ECO:0000269" key="5">
    <source>
    </source>
</evidence>
<evidence type="ECO:0000305" key="6"/>
<comment type="function">
    <text evidence="1">This alpha-adrenergic receptor mediates its action by association with G proteins that activate a phosphatidylinositol-calcium second messenger system. Its effect is mediated by G(q) and G(11) proteins. Nuclear ADRA1A-ADRA1B heterooligomers regulate phenylephrine (PE)-stimulated ERK signaling in cardiac myocytes (By similarity).</text>
</comment>
<comment type="subunit">
    <text evidence="2">Homo- and heterooligomer. Heterooligomerizes with ADRA1B homooligomers in cardiac myocytes. Interacts with CAVIN4.</text>
</comment>
<comment type="subcellular location">
    <subcellularLocation>
        <location evidence="5">Nucleus membrane</location>
        <topology evidence="5">Multi-pass membrane protein</topology>
    </subcellularLocation>
    <subcellularLocation>
        <location evidence="2">Cell membrane</location>
        <topology evidence="3">Multi-pass membrane protein</topology>
    </subcellularLocation>
    <subcellularLocation>
        <location evidence="2">Cytoplasm</location>
    </subcellularLocation>
    <subcellularLocation>
        <location evidence="2">Membrane</location>
        <location evidence="2">Caveola</location>
    </subcellularLocation>
    <text evidence="1">Location at the nuclear membrane facilitates heterooligomerization and regulates ERK-mediated signaling in cardiac myocytes. Colocalizes with GNAQ, PLCB1 as well as LAP2 at the nuclear membrane of cardiac myocytes (By similarity).</text>
</comment>
<comment type="similarity">
    <text evidence="4">Belongs to the G-protein coupled receptor 1 family. Adrenergic receptor subfamily. ADRA1A sub-subfamily.</text>
</comment>
<comment type="sequence caution" evidence="6">
    <conflict type="erroneous initiation">
        <sequence resource="EMBL-CDS" id="AAB47044"/>
    </conflict>
    <text>Truncated N-terminus.</text>
</comment>
<feature type="chain" id="PRO_0000069064" description="Alpha-1A adrenergic receptor">
    <location>
        <begin position="1"/>
        <end position="466"/>
    </location>
</feature>
<feature type="topological domain" description="Extracellular" evidence="1">
    <location>
        <begin position="1"/>
        <end position="27"/>
    </location>
</feature>
<feature type="transmembrane region" description="Helical; Name=1" evidence="1">
    <location>
        <begin position="28"/>
        <end position="51"/>
    </location>
</feature>
<feature type="topological domain" description="Cytoplasmic" evidence="1">
    <location>
        <begin position="52"/>
        <end position="64"/>
    </location>
</feature>
<feature type="transmembrane region" description="Helical; Name=2" evidence="1">
    <location>
        <begin position="65"/>
        <end position="88"/>
    </location>
</feature>
<feature type="topological domain" description="Extracellular" evidence="1">
    <location>
        <begin position="89"/>
        <end position="99"/>
    </location>
</feature>
<feature type="transmembrane region" description="Helical; Name=3" evidence="1">
    <location>
        <begin position="100"/>
        <end position="122"/>
    </location>
</feature>
<feature type="topological domain" description="Cytoplasmic" evidence="1">
    <location>
        <begin position="123"/>
        <end position="143"/>
    </location>
</feature>
<feature type="transmembrane region" description="Helical; Name=4" evidence="1">
    <location>
        <begin position="144"/>
        <end position="167"/>
    </location>
</feature>
<feature type="topological domain" description="Extracellular" evidence="1">
    <location>
        <begin position="168"/>
        <end position="181"/>
    </location>
</feature>
<feature type="transmembrane region" description="Helical; Name=5" evidence="1">
    <location>
        <begin position="182"/>
        <end position="205"/>
    </location>
</feature>
<feature type="topological domain" description="Cytoplasmic" evidence="1">
    <location>
        <begin position="206"/>
        <end position="273"/>
    </location>
</feature>
<feature type="transmembrane region" description="Helical; Name=6" evidence="1">
    <location>
        <begin position="274"/>
        <end position="297"/>
    </location>
</feature>
<feature type="topological domain" description="Extracellular" evidence="1">
    <location>
        <begin position="298"/>
        <end position="305"/>
    </location>
</feature>
<feature type="transmembrane region" description="Helical; Name=7" evidence="1">
    <location>
        <begin position="306"/>
        <end position="329"/>
    </location>
</feature>
<feature type="topological domain" description="Cytoplasmic" evidence="1">
    <location>
        <begin position="330"/>
        <end position="466"/>
    </location>
</feature>
<feature type="short sequence motif" description="Nuclear localization signal" evidence="1">
    <location>
        <begin position="334"/>
        <end position="349"/>
    </location>
</feature>
<feature type="modified residue" description="Phosphoserine; by PKA" evidence="3">
    <location>
        <position position="215"/>
    </location>
</feature>
<feature type="lipid moiety-binding region" description="S-palmitoyl cysteine" evidence="3">
    <location>
        <position position="345"/>
    </location>
</feature>
<feature type="glycosylation site" description="N-linked (GlcNAc...) asparagine" evidence="3">
    <location>
        <position position="7"/>
    </location>
</feature>
<feature type="glycosylation site" description="N-linked (GlcNAc...) asparagine" evidence="3">
    <location>
        <position position="13"/>
    </location>
</feature>
<feature type="glycosylation site" description="N-linked (GlcNAc...) asparagine" evidence="3">
    <location>
        <position position="22"/>
    </location>
</feature>
<feature type="disulfide bond" evidence="4">
    <location>
        <begin position="99"/>
        <end position="176"/>
    </location>
</feature>
<feature type="sequence conflict" description="In Ref. 1; AAC02658." evidence="6" ref="1">
    <original>G</original>
    <variation>E</variation>
    <location>
        <position position="369"/>
    </location>
</feature>
<feature type="sequence conflict" description="In Ref. 1; AAC02658." evidence="6" ref="1">
    <original>R</original>
    <variation>C</variation>
    <location>
        <position position="395"/>
    </location>
</feature>
<name>ADA1A_MOUSE</name>
<sequence>MVLLSENASEGSNCTHPPAQVNISKAILLGVILGGLIIFGVLGNILVILSVACHRHLHSVTHYYIVNLAVADLLLTSTVLPFSAIFEILGYWAFGRVFCNIWAAVDVLCCTASIMGLCIISIDRYIGVSYPLRYPTIVTQRRGVRALLCVWALSLVISIGPLFGWRQQAPEDETICQINEEPGYVLFSALGSFYVPLTIILVMYCRVYVVAKRESRGLKSGLKTDKSDSEQVTLRIHRKNVPAEGSGVSSAKNKTHFSVRLLKFSREKKAAKTLGIVVGCFVLCWLPFFLVMPIGSFFPNFKPPETVFKIVFWLGYLNSCINPIIYPCSSQEFKKAFQNVLRIQCLRRRQSSKHALGYTLHPPSQAVEGQHRGMVRIPVGSGETFYKISKTDGVREWKFFSSMPQGSARITMPKDQSACTTARVRSKSFLQVCCCVGSSTPRPEENHQVPTIKIHTISLGENGEEV</sequence>
<protein>
    <recommendedName>
        <fullName>Alpha-1A adrenergic receptor</fullName>
    </recommendedName>
    <alternativeName>
        <fullName>Alpha-1A adrenoreceptor</fullName>
        <shortName>Alpha-1A adrenoceptor</shortName>
    </alternativeName>
    <alternativeName>
        <fullName>Alpha-1C adrenergic receptor</fullName>
    </alternativeName>
</protein>
<organism>
    <name type="scientific">Mus musculus</name>
    <name type="common">Mouse</name>
    <dbReference type="NCBI Taxonomy" id="10090"/>
    <lineage>
        <taxon>Eukaryota</taxon>
        <taxon>Metazoa</taxon>
        <taxon>Chordata</taxon>
        <taxon>Craniata</taxon>
        <taxon>Vertebrata</taxon>
        <taxon>Euteleostomi</taxon>
        <taxon>Mammalia</taxon>
        <taxon>Eutheria</taxon>
        <taxon>Euarchontoglires</taxon>
        <taxon>Glires</taxon>
        <taxon>Rodentia</taxon>
        <taxon>Myomorpha</taxon>
        <taxon>Muroidea</taxon>
        <taxon>Muridae</taxon>
        <taxon>Murinae</taxon>
        <taxon>Mus</taxon>
        <taxon>Mus</taxon>
    </lineage>
</organism>
<accession>P97718</accession>
<accession>O54913</accession>
<accession>Q8BV77</accession>